<organism>
    <name type="scientific">Synechococcus elongatus (strain ATCC 33912 / PCC 7942 / FACHB-805)</name>
    <name type="common">Anacystis nidulans R2</name>
    <dbReference type="NCBI Taxonomy" id="1140"/>
    <lineage>
        <taxon>Bacteria</taxon>
        <taxon>Bacillati</taxon>
        <taxon>Cyanobacteriota</taxon>
        <taxon>Cyanophyceae</taxon>
        <taxon>Synechococcales</taxon>
        <taxon>Synechococcaceae</taxon>
        <taxon>Synechococcus</taxon>
    </lineage>
</organism>
<gene>
    <name type="ordered locus">Synpcc7942_1027</name>
</gene>
<sequence length="87" mass="9097">MAQALLNAGFGNFVAADRLIAIVSPDSAPIRRTVSEARERGQLVDVTCGRRTKAVLIADSGHVILSALQPETIAGRILNSRGDLSGA</sequence>
<feature type="chain" id="PRO_0000236639" description="Putative regulatory protein Synpcc7942_1027">
    <location>
        <begin position="1"/>
        <end position="87"/>
    </location>
</feature>
<dbReference type="EMBL" id="CP000100">
    <property type="protein sequence ID" value="ABB57057.1"/>
    <property type="status" value="ALT_INIT"/>
    <property type="molecule type" value="Genomic_DNA"/>
</dbReference>
<dbReference type="SMR" id="Q31PG2"/>
<dbReference type="STRING" id="1140.Synpcc7942_1027"/>
<dbReference type="PaxDb" id="1140-Synpcc7942_1027"/>
<dbReference type="KEGG" id="syf:Synpcc7942_1027"/>
<dbReference type="eggNOG" id="COG2052">
    <property type="taxonomic scope" value="Bacteria"/>
</dbReference>
<dbReference type="HOGENOM" id="CLU_165326_0_0_3"/>
<dbReference type="BioCyc" id="SYNEL:SYNPCC7942_1027-MONOMER"/>
<dbReference type="Proteomes" id="UP000889800">
    <property type="component" value="Chromosome"/>
</dbReference>
<dbReference type="HAMAP" id="MF_01503">
    <property type="entry name" value="RemA"/>
    <property type="match status" value="1"/>
</dbReference>
<dbReference type="InterPro" id="IPR007169">
    <property type="entry name" value="RemA-like"/>
</dbReference>
<dbReference type="NCBIfam" id="NF003315">
    <property type="entry name" value="PRK04323.1"/>
    <property type="match status" value="1"/>
</dbReference>
<dbReference type="PANTHER" id="PTHR38449:SF1">
    <property type="entry name" value="REGULATORY PROTEIN SSL2874-RELATED"/>
    <property type="match status" value="1"/>
</dbReference>
<dbReference type="PANTHER" id="PTHR38449">
    <property type="entry name" value="REGULATORY PROTEIN TM_1690-RELATED"/>
    <property type="match status" value="1"/>
</dbReference>
<dbReference type="Pfam" id="PF04025">
    <property type="entry name" value="RemA-like"/>
    <property type="match status" value="1"/>
</dbReference>
<evidence type="ECO:0000255" key="1">
    <source>
        <dbReference type="HAMAP-Rule" id="MF_01503"/>
    </source>
</evidence>
<evidence type="ECO:0000305" key="2"/>
<keyword id="KW-1185">Reference proteome</keyword>
<accession>Q31PG2</accession>
<reference key="1">
    <citation type="submission" date="2005-08" db="EMBL/GenBank/DDBJ databases">
        <title>Complete sequence of chromosome 1 of Synechococcus elongatus PCC 7942.</title>
        <authorList>
            <consortium name="US DOE Joint Genome Institute"/>
            <person name="Copeland A."/>
            <person name="Lucas S."/>
            <person name="Lapidus A."/>
            <person name="Barry K."/>
            <person name="Detter J.C."/>
            <person name="Glavina T."/>
            <person name="Hammon N."/>
            <person name="Israni S."/>
            <person name="Pitluck S."/>
            <person name="Schmutz J."/>
            <person name="Larimer F."/>
            <person name="Land M."/>
            <person name="Kyrpides N."/>
            <person name="Lykidis A."/>
            <person name="Golden S."/>
            <person name="Richardson P."/>
        </authorList>
    </citation>
    <scope>NUCLEOTIDE SEQUENCE [LARGE SCALE GENOMIC DNA]</scope>
    <source>
        <strain>ATCC 33912 / PCC 7942 / FACHB-805</strain>
    </source>
</reference>
<comment type="similarity">
    <text evidence="1">Belongs to the RemA family.</text>
</comment>
<comment type="sequence caution" evidence="2">
    <conflict type="erroneous initiation">
        <sequence resource="EMBL-CDS" id="ABB57057"/>
    </conflict>
</comment>
<name>Y1027_SYNE7</name>
<protein>
    <recommendedName>
        <fullName evidence="1">Putative regulatory protein Synpcc7942_1027</fullName>
    </recommendedName>
</protein>
<proteinExistence type="inferred from homology"/>